<sequence>MQVTVETKEGLERVLTITVPAANIEDAVNAELRNIAKNRRFDGFRKGKVPMKMVAKMYGSAVRHDKMGEVMQRHFIEAIVKDKINPAGAPTFAPVEFAEGQDLVFTATFEIYPEVTLQGLDKVVVEKPQVEVKDEDVAEMLETLRKQQATWSDADVAAEDGTRATINFVGSIDGELFEGGKADNFPLEMGQGRMIPGFEDGIKGKKAGDELTINVNFPEDYHAENLKGKAAEFAITVVKVEARELPEMNDEFVTKFGAQGGVEGLKTEVRKNMERELAQTVKNKIKEQAINGLVEQNNIDVPSALIDQEVQVLRQQAVQRFGGNADSAPELPRELFEEQAKRRVVVGLLLGEVIKTEELKADDEKVKALINEMASAYEDPTEVVAYYEGNEQMMNNMRNVALEEQAIDAILAKAQVSEKAVGFNELMNQQPA</sequence>
<comment type="function">
    <text evidence="1">Involved in protein export. Acts as a chaperone by maintaining the newly synthesized protein in an open conformation. Functions as a peptidyl-prolyl cis-trans isomerase.</text>
</comment>
<comment type="catalytic activity">
    <reaction evidence="1">
        <text>[protein]-peptidylproline (omega=180) = [protein]-peptidylproline (omega=0)</text>
        <dbReference type="Rhea" id="RHEA:16237"/>
        <dbReference type="Rhea" id="RHEA-COMP:10747"/>
        <dbReference type="Rhea" id="RHEA-COMP:10748"/>
        <dbReference type="ChEBI" id="CHEBI:83833"/>
        <dbReference type="ChEBI" id="CHEBI:83834"/>
        <dbReference type="EC" id="5.2.1.8"/>
    </reaction>
</comment>
<comment type="subcellular location">
    <subcellularLocation>
        <location>Cytoplasm</location>
    </subcellularLocation>
    <text evidence="1">About half TF is bound to the ribosome near the polypeptide exit tunnel while the other half is free in the cytoplasm.</text>
</comment>
<comment type="domain">
    <text evidence="1">Consists of 3 domains; the N-terminus binds the ribosome, the middle domain has PPIase activity, while the C-terminus has intrinsic chaperone activity on its own.</text>
</comment>
<comment type="similarity">
    <text evidence="1">Belongs to the FKBP-type PPIase family. Tig subfamily.</text>
</comment>
<accession>B6EHK2</accession>
<organism>
    <name type="scientific">Aliivibrio salmonicida (strain LFI1238)</name>
    <name type="common">Vibrio salmonicida (strain LFI1238)</name>
    <dbReference type="NCBI Taxonomy" id="316275"/>
    <lineage>
        <taxon>Bacteria</taxon>
        <taxon>Pseudomonadati</taxon>
        <taxon>Pseudomonadota</taxon>
        <taxon>Gammaproteobacteria</taxon>
        <taxon>Vibrionales</taxon>
        <taxon>Vibrionaceae</taxon>
        <taxon>Aliivibrio</taxon>
    </lineage>
</organism>
<keyword id="KW-0131">Cell cycle</keyword>
<keyword id="KW-0132">Cell division</keyword>
<keyword id="KW-0143">Chaperone</keyword>
<keyword id="KW-0963">Cytoplasm</keyword>
<keyword id="KW-0413">Isomerase</keyword>
<keyword id="KW-0697">Rotamase</keyword>
<feature type="chain" id="PRO_1000115498" description="Trigger factor">
    <location>
        <begin position="1"/>
        <end position="432"/>
    </location>
</feature>
<feature type="domain" description="PPIase FKBP-type" evidence="1">
    <location>
        <begin position="161"/>
        <end position="246"/>
    </location>
</feature>
<proteinExistence type="inferred from homology"/>
<name>TIG_ALISL</name>
<reference key="1">
    <citation type="journal article" date="2008" name="BMC Genomics">
        <title>The genome sequence of the fish pathogen Aliivibrio salmonicida strain LFI1238 shows extensive evidence of gene decay.</title>
        <authorList>
            <person name="Hjerde E."/>
            <person name="Lorentzen M.S."/>
            <person name="Holden M.T."/>
            <person name="Seeger K."/>
            <person name="Paulsen S."/>
            <person name="Bason N."/>
            <person name="Churcher C."/>
            <person name="Harris D."/>
            <person name="Norbertczak H."/>
            <person name="Quail M.A."/>
            <person name="Sanders S."/>
            <person name="Thurston S."/>
            <person name="Parkhill J."/>
            <person name="Willassen N.P."/>
            <person name="Thomson N.R."/>
        </authorList>
    </citation>
    <scope>NUCLEOTIDE SEQUENCE [LARGE SCALE GENOMIC DNA]</scope>
    <source>
        <strain>LFI1238</strain>
    </source>
</reference>
<gene>
    <name evidence="1" type="primary">tig</name>
    <name type="ordered locus">VSAL_I0817</name>
</gene>
<protein>
    <recommendedName>
        <fullName evidence="1">Trigger factor</fullName>
        <shortName evidence="1">TF</shortName>
        <ecNumber evidence="1">5.2.1.8</ecNumber>
    </recommendedName>
    <alternativeName>
        <fullName evidence="1">PPIase</fullName>
    </alternativeName>
</protein>
<dbReference type="EC" id="5.2.1.8" evidence="1"/>
<dbReference type="EMBL" id="FM178379">
    <property type="protein sequence ID" value="CAQ78502.1"/>
    <property type="molecule type" value="Genomic_DNA"/>
</dbReference>
<dbReference type="RefSeq" id="WP_012549606.1">
    <property type="nucleotide sequence ID" value="NC_011312.1"/>
</dbReference>
<dbReference type="SMR" id="B6EHK2"/>
<dbReference type="KEGG" id="vsa:VSAL_I0817"/>
<dbReference type="eggNOG" id="COG0544">
    <property type="taxonomic scope" value="Bacteria"/>
</dbReference>
<dbReference type="HOGENOM" id="CLU_033058_2_0_6"/>
<dbReference type="Proteomes" id="UP000001730">
    <property type="component" value="Chromosome 1"/>
</dbReference>
<dbReference type="GO" id="GO:0005737">
    <property type="term" value="C:cytoplasm"/>
    <property type="evidence" value="ECO:0007669"/>
    <property type="project" value="UniProtKB-SubCell"/>
</dbReference>
<dbReference type="GO" id="GO:0003755">
    <property type="term" value="F:peptidyl-prolyl cis-trans isomerase activity"/>
    <property type="evidence" value="ECO:0007669"/>
    <property type="project" value="UniProtKB-UniRule"/>
</dbReference>
<dbReference type="GO" id="GO:0044183">
    <property type="term" value="F:protein folding chaperone"/>
    <property type="evidence" value="ECO:0007669"/>
    <property type="project" value="TreeGrafter"/>
</dbReference>
<dbReference type="GO" id="GO:0043022">
    <property type="term" value="F:ribosome binding"/>
    <property type="evidence" value="ECO:0007669"/>
    <property type="project" value="TreeGrafter"/>
</dbReference>
<dbReference type="GO" id="GO:0051083">
    <property type="term" value="P:'de novo' cotranslational protein folding"/>
    <property type="evidence" value="ECO:0007669"/>
    <property type="project" value="TreeGrafter"/>
</dbReference>
<dbReference type="GO" id="GO:0051301">
    <property type="term" value="P:cell division"/>
    <property type="evidence" value="ECO:0007669"/>
    <property type="project" value="UniProtKB-KW"/>
</dbReference>
<dbReference type="GO" id="GO:0061077">
    <property type="term" value="P:chaperone-mediated protein folding"/>
    <property type="evidence" value="ECO:0007669"/>
    <property type="project" value="TreeGrafter"/>
</dbReference>
<dbReference type="GO" id="GO:0015031">
    <property type="term" value="P:protein transport"/>
    <property type="evidence" value="ECO:0007669"/>
    <property type="project" value="UniProtKB-UniRule"/>
</dbReference>
<dbReference type="GO" id="GO:0043335">
    <property type="term" value="P:protein unfolding"/>
    <property type="evidence" value="ECO:0007669"/>
    <property type="project" value="TreeGrafter"/>
</dbReference>
<dbReference type="FunFam" id="3.10.50.40:FF:000001">
    <property type="entry name" value="Trigger factor"/>
    <property type="match status" value="1"/>
</dbReference>
<dbReference type="FunFam" id="3.30.70.1050:FF:000001">
    <property type="entry name" value="Trigger factor"/>
    <property type="match status" value="1"/>
</dbReference>
<dbReference type="Gene3D" id="3.10.50.40">
    <property type="match status" value="1"/>
</dbReference>
<dbReference type="Gene3D" id="3.30.70.1050">
    <property type="entry name" value="Trigger factor ribosome-binding domain"/>
    <property type="match status" value="1"/>
</dbReference>
<dbReference type="Gene3D" id="1.10.3120.10">
    <property type="entry name" value="Trigger factor, C-terminal domain"/>
    <property type="match status" value="1"/>
</dbReference>
<dbReference type="HAMAP" id="MF_00303">
    <property type="entry name" value="Trigger_factor_Tig"/>
    <property type="match status" value="1"/>
</dbReference>
<dbReference type="InterPro" id="IPR046357">
    <property type="entry name" value="PPIase_dom_sf"/>
</dbReference>
<dbReference type="InterPro" id="IPR001179">
    <property type="entry name" value="PPIase_FKBP_dom"/>
</dbReference>
<dbReference type="InterPro" id="IPR005215">
    <property type="entry name" value="Trig_fac"/>
</dbReference>
<dbReference type="InterPro" id="IPR008880">
    <property type="entry name" value="Trigger_fac_C"/>
</dbReference>
<dbReference type="InterPro" id="IPR037041">
    <property type="entry name" value="Trigger_fac_C_sf"/>
</dbReference>
<dbReference type="InterPro" id="IPR008881">
    <property type="entry name" value="Trigger_fac_ribosome-bd_bac"/>
</dbReference>
<dbReference type="InterPro" id="IPR036611">
    <property type="entry name" value="Trigger_fac_ribosome-bd_sf"/>
</dbReference>
<dbReference type="InterPro" id="IPR027304">
    <property type="entry name" value="Trigger_fact/SurA_dom_sf"/>
</dbReference>
<dbReference type="NCBIfam" id="TIGR00115">
    <property type="entry name" value="tig"/>
    <property type="match status" value="1"/>
</dbReference>
<dbReference type="PANTHER" id="PTHR30560">
    <property type="entry name" value="TRIGGER FACTOR CHAPERONE AND PEPTIDYL-PROLYL CIS/TRANS ISOMERASE"/>
    <property type="match status" value="1"/>
</dbReference>
<dbReference type="PANTHER" id="PTHR30560:SF3">
    <property type="entry name" value="TRIGGER FACTOR-LIKE PROTEIN TIG, CHLOROPLASTIC"/>
    <property type="match status" value="1"/>
</dbReference>
<dbReference type="Pfam" id="PF00254">
    <property type="entry name" value="FKBP_C"/>
    <property type="match status" value="1"/>
</dbReference>
<dbReference type="Pfam" id="PF05698">
    <property type="entry name" value="Trigger_C"/>
    <property type="match status" value="1"/>
</dbReference>
<dbReference type="Pfam" id="PF05697">
    <property type="entry name" value="Trigger_N"/>
    <property type="match status" value="1"/>
</dbReference>
<dbReference type="PIRSF" id="PIRSF003095">
    <property type="entry name" value="Trigger_factor"/>
    <property type="match status" value="1"/>
</dbReference>
<dbReference type="SUPFAM" id="SSF54534">
    <property type="entry name" value="FKBP-like"/>
    <property type="match status" value="1"/>
</dbReference>
<dbReference type="SUPFAM" id="SSF109998">
    <property type="entry name" value="Triger factor/SurA peptide-binding domain-like"/>
    <property type="match status" value="1"/>
</dbReference>
<dbReference type="SUPFAM" id="SSF102735">
    <property type="entry name" value="Trigger factor ribosome-binding domain"/>
    <property type="match status" value="1"/>
</dbReference>
<dbReference type="PROSITE" id="PS50059">
    <property type="entry name" value="FKBP_PPIASE"/>
    <property type="match status" value="1"/>
</dbReference>
<evidence type="ECO:0000255" key="1">
    <source>
        <dbReference type="HAMAP-Rule" id="MF_00303"/>
    </source>
</evidence>